<name>GCST_PYRAB</name>
<keyword id="KW-0032">Aminotransferase</keyword>
<keyword id="KW-0808">Transferase</keyword>
<feature type="chain" id="PRO_0000122623" description="Probable aminomethyltransferase">
    <location>
        <begin position="1"/>
        <end position="398"/>
    </location>
</feature>
<accession>Q9UZP8</accession>
<accession>G8ZJQ1</accession>
<dbReference type="EC" id="2.1.2.10" evidence="1"/>
<dbReference type="EMBL" id="AJ248286">
    <property type="protein sequence ID" value="CAB50008.1"/>
    <property type="molecule type" value="Genomic_DNA"/>
</dbReference>
<dbReference type="EMBL" id="HE613800">
    <property type="protein sequence ID" value="CCE70510.1"/>
    <property type="molecule type" value="Genomic_DNA"/>
</dbReference>
<dbReference type="PIR" id="C75088">
    <property type="entry name" value="C75088"/>
</dbReference>
<dbReference type="RefSeq" id="WP_010868215.1">
    <property type="nucleotide sequence ID" value="NC_000868.1"/>
</dbReference>
<dbReference type="SMR" id="Q9UZP8"/>
<dbReference type="STRING" id="272844.PAB1638"/>
<dbReference type="KEGG" id="pab:PAB1638"/>
<dbReference type="PATRIC" id="fig|272844.11.peg.1153"/>
<dbReference type="eggNOG" id="arCOG00756">
    <property type="taxonomic scope" value="Archaea"/>
</dbReference>
<dbReference type="HOGENOM" id="CLU_007884_10_2_2"/>
<dbReference type="OrthoDB" id="2001at2157"/>
<dbReference type="PhylomeDB" id="Q9UZP8"/>
<dbReference type="Proteomes" id="UP000000810">
    <property type="component" value="Chromosome"/>
</dbReference>
<dbReference type="Proteomes" id="UP000009139">
    <property type="component" value="Chromosome"/>
</dbReference>
<dbReference type="GO" id="GO:0005960">
    <property type="term" value="C:glycine cleavage complex"/>
    <property type="evidence" value="ECO:0007669"/>
    <property type="project" value="InterPro"/>
</dbReference>
<dbReference type="GO" id="GO:0004047">
    <property type="term" value="F:aminomethyltransferase activity"/>
    <property type="evidence" value="ECO:0007669"/>
    <property type="project" value="UniProtKB-UniRule"/>
</dbReference>
<dbReference type="GO" id="GO:0008483">
    <property type="term" value="F:transaminase activity"/>
    <property type="evidence" value="ECO:0007669"/>
    <property type="project" value="UniProtKB-KW"/>
</dbReference>
<dbReference type="GO" id="GO:0019464">
    <property type="term" value="P:glycine decarboxylation via glycine cleavage system"/>
    <property type="evidence" value="ECO:0007669"/>
    <property type="project" value="UniProtKB-UniRule"/>
</dbReference>
<dbReference type="FunFam" id="2.40.30.110:FF:000003">
    <property type="entry name" value="Aminomethyltransferase"/>
    <property type="match status" value="1"/>
</dbReference>
<dbReference type="Gene3D" id="2.40.30.110">
    <property type="entry name" value="Aminomethyltransferase beta-barrel domains"/>
    <property type="match status" value="1"/>
</dbReference>
<dbReference type="Gene3D" id="3.30.70.1400">
    <property type="entry name" value="Aminomethyltransferase beta-barrel domains"/>
    <property type="match status" value="1"/>
</dbReference>
<dbReference type="Gene3D" id="4.10.1250.10">
    <property type="entry name" value="Aminomethyltransferase fragment"/>
    <property type="match status" value="1"/>
</dbReference>
<dbReference type="Gene3D" id="3.30.1360.120">
    <property type="entry name" value="Probable tRNA modification gtpase trme, domain 1"/>
    <property type="match status" value="1"/>
</dbReference>
<dbReference type="HAMAP" id="MF_00259">
    <property type="entry name" value="GcvT"/>
    <property type="match status" value="1"/>
</dbReference>
<dbReference type="InterPro" id="IPR006223">
    <property type="entry name" value="GCS_T"/>
</dbReference>
<dbReference type="InterPro" id="IPR022903">
    <property type="entry name" value="GCS_T_bac"/>
</dbReference>
<dbReference type="InterPro" id="IPR013977">
    <property type="entry name" value="GCST_C"/>
</dbReference>
<dbReference type="InterPro" id="IPR006222">
    <property type="entry name" value="GCV_T_N"/>
</dbReference>
<dbReference type="InterPro" id="IPR028896">
    <property type="entry name" value="GcvT/YgfZ/DmdA"/>
</dbReference>
<dbReference type="InterPro" id="IPR029043">
    <property type="entry name" value="GcvT/YgfZ_C"/>
</dbReference>
<dbReference type="InterPro" id="IPR027266">
    <property type="entry name" value="TrmE/GcvT_dom1"/>
</dbReference>
<dbReference type="NCBIfam" id="TIGR00528">
    <property type="entry name" value="gcvT"/>
    <property type="match status" value="1"/>
</dbReference>
<dbReference type="NCBIfam" id="NF001567">
    <property type="entry name" value="PRK00389.1"/>
    <property type="match status" value="1"/>
</dbReference>
<dbReference type="PANTHER" id="PTHR43757">
    <property type="entry name" value="AMINOMETHYLTRANSFERASE"/>
    <property type="match status" value="1"/>
</dbReference>
<dbReference type="PANTHER" id="PTHR43757:SF2">
    <property type="entry name" value="AMINOMETHYLTRANSFERASE, MITOCHONDRIAL"/>
    <property type="match status" value="1"/>
</dbReference>
<dbReference type="Pfam" id="PF01571">
    <property type="entry name" value="GCV_T"/>
    <property type="match status" value="1"/>
</dbReference>
<dbReference type="Pfam" id="PF08669">
    <property type="entry name" value="GCV_T_C"/>
    <property type="match status" value="1"/>
</dbReference>
<dbReference type="PIRSF" id="PIRSF006487">
    <property type="entry name" value="GcvT"/>
    <property type="match status" value="1"/>
</dbReference>
<dbReference type="SUPFAM" id="SSF101790">
    <property type="entry name" value="Aminomethyltransferase beta-barrel domain"/>
    <property type="match status" value="1"/>
</dbReference>
<dbReference type="SUPFAM" id="SSF103025">
    <property type="entry name" value="Folate-binding domain"/>
    <property type="match status" value="1"/>
</dbReference>
<organism>
    <name type="scientific">Pyrococcus abyssi (strain GE5 / Orsay)</name>
    <dbReference type="NCBI Taxonomy" id="272844"/>
    <lineage>
        <taxon>Archaea</taxon>
        <taxon>Methanobacteriati</taxon>
        <taxon>Methanobacteriota</taxon>
        <taxon>Thermococci</taxon>
        <taxon>Thermococcales</taxon>
        <taxon>Thermococcaceae</taxon>
        <taxon>Pyrococcus</taxon>
    </lineage>
</organism>
<evidence type="ECO:0000255" key="1">
    <source>
        <dbReference type="HAMAP-Rule" id="MF_00259"/>
    </source>
</evidence>
<gene>
    <name evidence="1" type="primary">gcvT</name>
    <name type="ordered locus">PYRAB10970</name>
    <name type="ORF">PAB1638</name>
</gene>
<proteinExistence type="inferred from homology"/>
<protein>
    <recommendedName>
        <fullName evidence="1">Probable aminomethyltransferase</fullName>
        <ecNumber evidence="1">2.1.2.10</ecNumber>
    </recommendedName>
    <alternativeName>
        <fullName evidence="1">Glycine cleavage system T protein</fullName>
    </alternativeName>
</protein>
<sequence>MAKRVHLFDWHKEHAKKIEEFAGWEMPIWYSSIKEEHLAVRNAVGLFDVSHMGEIYFRGKDALKFLQYVTTNDISKPPAISGIYTLVLNERGAIKDETLIFNMGNNEYLMICDSDAFEKLYAWFTYLKKTIEQFTKLDLEIELKTYDIAMFAVQGPKARDLARDLFGIDINEMWWFQARWVELDGIKMLLSRSGYTGENGFEVYIEDANPYHPDESKRGEPEKALHVWERILEEGKKYGIKPAGLGARDTLRLEAGYTLYGNETKELQLLSTDIDEVTPLQANLEFAIYWDKDFIGKDALLKQKERGLGRKLVHFKMVDKGIPREGYKVYANGELIGEVTSGTLSPLLNVGIGIAFVKEEYAKPGIEIEVEIRGARKKAITVTPPFYDPKKYGLFRET</sequence>
<comment type="function">
    <text evidence="1">The glycine cleavage system catalyzes the degradation of glycine.</text>
</comment>
<comment type="catalytic activity">
    <reaction evidence="1">
        <text>N(6)-[(R)-S(8)-aminomethyldihydrolipoyl]-L-lysyl-[protein] + (6S)-5,6,7,8-tetrahydrofolate = N(6)-[(R)-dihydrolipoyl]-L-lysyl-[protein] + (6R)-5,10-methylene-5,6,7,8-tetrahydrofolate + NH4(+)</text>
        <dbReference type="Rhea" id="RHEA:16945"/>
        <dbReference type="Rhea" id="RHEA-COMP:10475"/>
        <dbReference type="Rhea" id="RHEA-COMP:10492"/>
        <dbReference type="ChEBI" id="CHEBI:15636"/>
        <dbReference type="ChEBI" id="CHEBI:28938"/>
        <dbReference type="ChEBI" id="CHEBI:57453"/>
        <dbReference type="ChEBI" id="CHEBI:83100"/>
        <dbReference type="ChEBI" id="CHEBI:83143"/>
        <dbReference type="EC" id="2.1.2.10"/>
    </reaction>
</comment>
<comment type="subunit">
    <text evidence="1">The glycine cleavage system is composed of four proteins: P, T, L and H.</text>
</comment>
<comment type="similarity">
    <text evidence="1">Belongs to the GcvT family.</text>
</comment>
<reference key="1">
    <citation type="journal article" date="2003" name="Mol. Microbiol.">
        <title>An integrated analysis of the genome of the hyperthermophilic archaeon Pyrococcus abyssi.</title>
        <authorList>
            <person name="Cohen G.N."/>
            <person name="Barbe V."/>
            <person name="Flament D."/>
            <person name="Galperin M."/>
            <person name="Heilig R."/>
            <person name="Lecompte O."/>
            <person name="Poch O."/>
            <person name="Prieur D."/>
            <person name="Querellou J."/>
            <person name="Ripp R."/>
            <person name="Thierry J.-C."/>
            <person name="Van der Oost J."/>
            <person name="Weissenbach J."/>
            <person name="Zivanovic Y."/>
            <person name="Forterre P."/>
        </authorList>
    </citation>
    <scope>NUCLEOTIDE SEQUENCE [LARGE SCALE GENOMIC DNA]</scope>
    <source>
        <strain>GE5 / Orsay</strain>
    </source>
</reference>
<reference key="2">
    <citation type="journal article" date="2012" name="Curr. Microbiol.">
        <title>Re-annotation of two hyperthermophilic archaea Pyrococcus abyssi GE5 and Pyrococcus furiosus DSM 3638.</title>
        <authorList>
            <person name="Gao J."/>
            <person name="Wang J."/>
        </authorList>
    </citation>
    <scope>GENOME REANNOTATION</scope>
    <source>
        <strain>GE5 / Orsay</strain>
    </source>
</reference>